<proteinExistence type="evidence at protein level"/>
<organism>
    <name type="scientific">Archaeoglobus fulgidus (strain ATCC 49558 / DSM 4304 / JCM 9628 / NBRC 100126 / VC-16)</name>
    <dbReference type="NCBI Taxonomy" id="224325"/>
    <lineage>
        <taxon>Archaea</taxon>
        <taxon>Methanobacteriati</taxon>
        <taxon>Methanobacteriota</taxon>
        <taxon>Archaeoglobi</taxon>
        <taxon>Archaeoglobales</taxon>
        <taxon>Archaeoglobaceae</taxon>
        <taxon>Archaeoglobus</taxon>
    </lineage>
</organism>
<evidence type="ECO:0000255" key="1">
    <source>
        <dbReference type="HAMAP-Rule" id="MF_01678"/>
    </source>
</evidence>
<evidence type="ECO:0000305" key="2"/>
<evidence type="ECO:0007829" key="3">
    <source>
        <dbReference type="PDB" id="1T5O"/>
    </source>
</evidence>
<keyword id="KW-0002">3D-structure</keyword>
<keyword id="KW-0028">Amino-acid biosynthesis</keyword>
<keyword id="KW-0413">Isomerase</keyword>
<keyword id="KW-0486">Methionine biosynthesis</keyword>
<keyword id="KW-1185">Reference proteome</keyword>
<protein>
    <recommendedName>
        <fullName evidence="1">Putative methylthioribose-1-phosphate isomerase</fullName>
        <shortName evidence="1">M1Pi</shortName>
        <shortName evidence="1">MTR-1-P isomerase</shortName>
        <ecNumber evidence="1">5.3.1.23</ecNumber>
    </recommendedName>
    <alternativeName>
        <fullName evidence="1">MTNA-like protein</fullName>
        <shortName evidence="1">aMTNA</shortName>
    </alternativeName>
    <alternativeName>
        <fullName evidence="1">S-methyl-5-thioribose-1-phosphate isomerase</fullName>
    </alternativeName>
</protein>
<sequence>MRSIFWDDGLKLIDQTKLPEKLEVIECRNVEELADAIKKLAVRGAPALEAAGAYGIALAAREREFADVDELKEHLKKAADFLASTRPTAVNLFVGIERALNAALKGESVEEVKELALREAEKLAEEDVERNRKMGEYGAELLEDGDVVLTYCNAGRLATVDWGTALGVVRSAVEQGKEIRVIACETRPLNQGSRLTCWELMEDGIDVTLITDSMVGIVMQKGMVDKVIVGADRIVRDAVFNKIGTYTVSVVAKHHNIPFYVAAPKATFDWERTAKDVVIEERPREELIFCGKRQIAPLNVKVYNPAFDPTPLENVTALITEYGVIYPPYEVNVPKVLKF</sequence>
<accession>O29877</accession>
<name>MTNA_ARCFU</name>
<feature type="chain" id="PRO_0000156085" description="Putative methylthioribose-1-phosphate isomerase">
    <location>
        <begin position="1"/>
        <end position="339"/>
    </location>
</feature>
<feature type="active site" description="Proton donor" evidence="1">
    <location>
        <position position="232"/>
    </location>
</feature>
<feature type="binding site" evidence="1">
    <location>
        <begin position="43"/>
        <end position="45"/>
    </location>
    <ligand>
        <name>substrate</name>
    </ligand>
</feature>
<feature type="binding site" evidence="1">
    <location>
        <position position="86"/>
    </location>
    <ligand>
        <name>substrate</name>
    </ligand>
</feature>
<feature type="binding site" evidence="1">
    <location>
        <position position="191"/>
    </location>
    <ligand>
        <name>substrate</name>
    </ligand>
</feature>
<feature type="binding site" evidence="1">
    <location>
        <begin position="241"/>
        <end position="242"/>
    </location>
    <ligand>
        <name>substrate</name>
    </ligand>
</feature>
<feature type="site" description="Transition state stabilizer" evidence="1">
    <location>
        <position position="152"/>
    </location>
</feature>
<feature type="strand" evidence="3">
    <location>
        <begin position="3"/>
        <end position="13"/>
    </location>
</feature>
<feature type="helix" evidence="3">
    <location>
        <begin position="15"/>
        <end position="17"/>
    </location>
</feature>
<feature type="turn" evidence="3">
    <location>
        <begin position="18"/>
        <end position="20"/>
    </location>
</feature>
<feature type="strand" evidence="3">
    <location>
        <begin position="24"/>
        <end position="27"/>
    </location>
</feature>
<feature type="helix" evidence="3">
    <location>
        <begin position="30"/>
        <end position="38"/>
    </location>
</feature>
<feature type="helix" evidence="3">
    <location>
        <begin position="45"/>
        <end position="59"/>
    </location>
</feature>
<feature type="helix" evidence="3">
    <location>
        <begin position="68"/>
        <end position="83"/>
    </location>
</feature>
<feature type="helix" evidence="3">
    <location>
        <begin position="90"/>
        <end position="103"/>
    </location>
</feature>
<feature type="helix" evidence="3">
    <location>
        <begin position="109"/>
        <end position="139"/>
    </location>
</feature>
<feature type="strand" evidence="3">
    <location>
        <begin position="147"/>
        <end position="150"/>
    </location>
</feature>
<feature type="strand" evidence="3">
    <location>
        <begin position="155"/>
        <end position="162"/>
    </location>
</feature>
<feature type="helix" evidence="3">
    <location>
        <begin position="165"/>
        <end position="174"/>
    </location>
</feature>
<feature type="strand" evidence="3">
    <location>
        <begin position="180"/>
        <end position="184"/>
    </location>
</feature>
<feature type="turn" evidence="3">
    <location>
        <begin position="187"/>
        <end position="190"/>
    </location>
</feature>
<feature type="helix" evidence="3">
    <location>
        <begin position="191"/>
        <end position="194"/>
    </location>
</feature>
<feature type="helix" evidence="3">
    <location>
        <begin position="196"/>
        <end position="202"/>
    </location>
</feature>
<feature type="strand" evidence="3">
    <location>
        <begin position="206"/>
        <end position="210"/>
    </location>
</feature>
<feature type="helix" evidence="3">
    <location>
        <begin position="212"/>
        <end position="214"/>
    </location>
</feature>
<feature type="helix" evidence="3">
    <location>
        <begin position="215"/>
        <end position="220"/>
    </location>
</feature>
<feature type="strand" evidence="3">
    <location>
        <begin position="225"/>
        <end position="229"/>
    </location>
</feature>
<feature type="strand" evidence="3">
    <location>
        <begin position="232"/>
        <end position="235"/>
    </location>
</feature>
<feature type="strand" evidence="3">
    <location>
        <begin position="238"/>
        <end position="242"/>
    </location>
</feature>
<feature type="helix" evidence="3">
    <location>
        <begin position="245"/>
        <end position="254"/>
    </location>
</feature>
<feature type="strand" evidence="3">
    <location>
        <begin position="259"/>
        <end position="262"/>
    </location>
</feature>
<feature type="helix" evidence="3">
    <location>
        <begin position="265"/>
        <end position="267"/>
    </location>
</feature>
<feature type="helix" evidence="3">
    <location>
        <begin position="274"/>
        <end position="276"/>
    </location>
</feature>
<feature type="helix" evidence="3">
    <location>
        <begin position="285"/>
        <end position="288"/>
    </location>
</feature>
<feature type="strand" evidence="3">
    <location>
        <begin position="305"/>
        <end position="311"/>
    </location>
</feature>
<feature type="helix" evidence="3">
    <location>
        <begin position="312"/>
        <end position="314"/>
    </location>
</feature>
<feature type="strand" evidence="3">
    <location>
        <begin position="316"/>
        <end position="320"/>
    </location>
</feature>
<feature type="strand" evidence="3">
    <location>
        <begin position="323"/>
        <end position="325"/>
    </location>
</feature>
<feature type="helix" evidence="3">
    <location>
        <begin position="329"/>
        <end position="336"/>
    </location>
</feature>
<dbReference type="EC" id="5.3.1.23" evidence="1"/>
<dbReference type="EMBL" id="AE000782">
    <property type="protein sequence ID" value="AAB90865.1"/>
    <property type="molecule type" value="Genomic_DNA"/>
</dbReference>
<dbReference type="PIR" id="B69296">
    <property type="entry name" value="B69296"/>
</dbReference>
<dbReference type="RefSeq" id="WP_010877877.1">
    <property type="nucleotide sequence ID" value="NC_000917.1"/>
</dbReference>
<dbReference type="PDB" id="1T5O">
    <property type="method" value="X-ray"/>
    <property type="resolution" value="1.90 A"/>
    <property type="chains" value="A/B/C/D=2-339"/>
</dbReference>
<dbReference type="PDBsum" id="1T5O"/>
<dbReference type="SMR" id="O29877"/>
<dbReference type="STRING" id="224325.AF_0370"/>
<dbReference type="PaxDb" id="224325-AF_0370"/>
<dbReference type="DNASU" id="1483585"/>
<dbReference type="EnsemblBacteria" id="AAB90865">
    <property type="protein sequence ID" value="AAB90865"/>
    <property type="gene ID" value="AF_0370"/>
</dbReference>
<dbReference type="KEGG" id="afu:AF_0370"/>
<dbReference type="eggNOG" id="arCOG01123">
    <property type="taxonomic scope" value="Archaea"/>
</dbReference>
<dbReference type="HOGENOM" id="CLU_016218_1_2_2"/>
<dbReference type="OrthoDB" id="45195at2157"/>
<dbReference type="PhylomeDB" id="O29877"/>
<dbReference type="EvolutionaryTrace" id="O29877"/>
<dbReference type="Proteomes" id="UP000002199">
    <property type="component" value="Chromosome"/>
</dbReference>
<dbReference type="GO" id="GO:0046523">
    <property type="term" value="F:S-methyl-5-thioribose-1-phosphate isomerase activity"/>
    <property type="evidence" value="ECO:0007669"/>
    <property type="project" value="UniProtKB-UniRule"/>
</dbReference>
<dbReference type="GO" id="GO:0019509">
    <property type="term" value="P:L-methionine salvage from methylthioadenosine"/>
    <property type="evidence" value="ECO:0007669"/>
    <property type="project" value="UniProtKB-UniRule"/>
</dbReference>
<dbReference type="FunFam" id="1.20.120.420:FF:000003">
    <property type="entry name" value="Methylthioribose-1-phosphate isomerase"/>
    <property type="match status" value="1"/>
</dbReference>
<dbReference type="FunFam" id="3.40.50.10470:FF:000006">
    <property type="entry name" value="Methylthioribose-1-phosphate isomerase"/>
    <property type="match status" value="1"/>
</dbReference>
<dbReference type="Gene3D" id="1.20.120.420">
    <property type="entry name" value="translation initiation factor eif-2b, domain 1"/>
    <property type="match status" value="1"/>
</dbReference>
<dbReference type="Gene3D" id="3.40.50.10470">
    <property type="entry name" value="Translation initiation factor eif-2b, domain 2"/>
    <property type="match status" value="1"/>
</dbReference>
<dbReference type="HAMAP" id="MF_01678">
    <property type="entry name" value="Salvage_MtnA"/>
    <property type="match status" value="1"/>
</dbReference>
<dbReference type="InterPro" id="IPR000649">
    <property type="entry name" value="IF-2B-related"/>
</dbReference>
<dbReference type="InterPro" id="IPR005251">
    <property type="entry name" value="IF-M1Pi"/>
</dbReference>
<dbReference type="InterPro" id="IPR042529">
    <property type="entry name" value="IF_2B-like_C"/>
</dbReference>
<dbReference type="InterPro" id="IPR011559">
    <property type="entry name" value="Initiation_fac_2B_a/b/d"/>
</dbReference>
<dbReference type="InterPro" id="IPR027363">
    <property type="entry name" value="M1Pi_N"/>
</dbReference>
<dbReference type="InterPro" id="IPR037171">
    <property type="entry name" value="NagB/RpiA_transferase-like"/>
</dbReference>
<dbReference type="NCBIfam" id="TIGR00524">
    <property type="entry name" value="eIF-2B_rel"/>
    <property type="match status" value="1"/>
</dbReference>
<dbReference type="NCBIfam" id="NF004326">
    <property type="entry name" value="PRK05720.1"/>
    <property type="match status" value="1"/>
</dbReference>
<dbReference type="NCBIfam" id="NF004700">
    <property type="entry name" value="PRK06036.1"/>
    <property type="match status" value="1"/>
</dbReference>
<dbReference type="NCBIfam" id="TIGR00512">
    <property type="entry name" value="salvage_mtnA"/>
    <property type="match status" value="1"/>
</dbReference>
<dbReference type="PANTHER" id="PTHR43475">
    <property type="entry name" value="METHYLTHIORIBOSE-1-PHOSPHATE ISOMERASE"/>
    <property type="match status" value="1"/>
</dbReference>
<dbReference type="PANTHER" id="PTHR43475:SF1">
    <property type="entry name" value="METHYLTHIORIBOSE-1-PHOSPHATE ISOMERASE"/>
    <property type="match status" value="1"/>
</dbReference>
<dbReference type="Pfam" id="PF01008">
    <property type="entry name" value="IF-2B"/>
    <property type="match status" value="1"/>
</dbReference>
<dbReference type="SUPFAM" id="SSF100950">
    <property type="entry name" value="NagB/RpiA/CoA transferase-like"/>
    <property type="match status" value="1"/>
</dbReference>
<gene>
    <name type="ordered locus">AF_0370</name>
</gene>
<reference key="1">
    <citation type="journal article" date="1997" name="Nature">
        <title>The complete genome sequence of the hyperthermophilic, sulphate-reducing archaeon Archaeoglobus fulgidus.</title>
        <authorList>
            <person name="Klenk H.-P."/>
            <person name="Clayton R.A."/>
            <person name="Tomb J.-F."/>
            <person name="White O."/>
            <person name="Nelson K.E."/>
            <person name="Ketchum K.A."/>
            <person name="Dodson R.J."/>
            <person name="Gwinn M.L."/>
            <person name="Hickey E.K."/>
            <person name="Peterson J.D."/>
            <person name="Richardson D.L."/>
            <person name="Kerlavage A.R."/>
            <person name="Graham D.E."/>
            <person name="Kyrpides N.C."/>
            <person name="Fleischmann R.D."/>
            <person name="Quackenbush J."/>
            <person name="Lee N.H."/>
            <person name="Sutton G.G."/>
            <person name="Gill S.R."/>
            <person name="Kirkness E.F."/>
            <person name="Dougherty B.A."/>
            <person name="McKenney K."/>
            <person name="Adams M.D."/>
            <person name="Loftus B.J."/>
            <person name="Peterson S.N."/>
            <person name="Reich C.I."/>
            <person name="McNeil L.K."/>
            <person name="Badger J.H."/>
            <person name="Glodek A."/>
            <person name="Zhou L."/>
            <person name="Overbeek R."/>
            <person name="Gocayne J.D."/>
            <person name="Weidman J.F."/>
            <person name="McDonald L.A."/>
            <person name="Utterback T.R."/>
            <person name="Cotton M.D."/>
            <person name="Spriggs T."/>
            <person name="Artiach P."/>
            <person name="Kaine B.P."/>
            <person name="Sykes S.M."/>
            <person name="Sadow P.W."/>
            <person name="D'Andrea K.P."/>
            <person name="Bowman C."/>
            <person name="Fujii C."/>
            <person name="Garland S.A."/>
            <person name="Mason T.M."/>
            <person name="Olsen G.J."/>
            <person name="Fraser C.M."/>
            <person name="Smith H.O."/>
            <person name="Woese C.R."/>
            <person name="Venter J.C."/>
        </authorList>
    </citation>
    <scope>NUCLEOTIDE SEQUENCE [LARGE SCALE GENOMIC DNA]</scope>
    <source>
        <strain>ATCC 49558 / DSM 4304 / JCM 9628 / NBRC 100126 / VC-16</strain>
    </source>
</reference>
<comment type="function">
    <text evidence="1">Catalyzes the interconversion of methylthioribose-1-phosphate (MTR-1-P) into methylthioribulose-1-phosphate (MTRu-1-P).</text>
</comment>
<comment type="catalytic activity">
    <reaction evidence="1">
        <text>5-(methylsulfanyl)-alpha-D-ribose 1-phosphate = 5-(methylsulfanyl)-D-ribulose 1-phosphate</text>
        <dbReference type="Rhea" id="RHEA:19989"/>
        <dbReference type="ChEBI" id="CHEBI:58533"/>
        <dbReference type="ChEBI" id="CHEBI:58548"/>
        <dbReference type="EC" id="5.3.1.23"/>
    </reaction>
</comment>
<comment type="similarity">
    <text evidence="2">Belongs to the eIF-2B alpha/beta/delta subunits family. MtnA subfamily.</text>
</comment>